<reference key="1">
    <citation type="journal article" date="2005" name="Nature">
        <title>Generation and annotation of the DNA sequences of human chromosomes 2 and 4.</title>
        <authorList>
            <person name="Hillier L.W."/>
            <person name="Graves T.A."/>
            <person name="Fulton R.S."/>
            <person name="Fulton L.A."/>
            <person name="Pepin K.H."/>
            <person name="Minx P."/>
            <person name="Wagner-McPherson C."/>
            <person name="Layman D."/>
            <person name="Wylie K."/>
            <person name="Sekhon M."/>
            <person name="Becker M.C."/>
            <person name="Fewell G.A."/>
            <person name="Delehaunty K.D."/>
            <person name="Miner T.L."/>
            <person name="Nash W.E."/>
            <person name="Kremitzki C."/>
            <person name="Oddy L."/>
            <person name="Du H."/>
            <person name="Sun H."/>
            <person name="Bradshaw-Cordum H."/>
            <person name="Ali J."/>
            <person name="Carter J."/>
            <person name="Cordes M."/>
            <person name="Harris A."/>
            <person name="Isak A."/>
            <person name="van Brunt A."/>
            <person name="Nguyen C."/>
            <person name="Du F."/>
            <person name="Courtney L."/>
            <person name="Kalicki J."/>
            <person name="Ozersky P."/>
            <person name="Abbott S."/>
            <person name="Armstrong J."/>
            <person name="Belter E.A."/>
            <person name="Caruso L."/>
            <person name="Cedroni M."/>
            <person name="Cotton M."/>
            <person name="Davidson T."/>
            <person name="Desai A."/>
            <person name="Elliott G."/>
            <person name="Erb T."/>
            <person name="Fronick C."/>
            <person name="Gaige T."/>
            <person name="Haakenson W."/>
            <person name="Haglund K."/>
            <person name="Holmes A."/>
            <person name="Harkins R."/>
            <person name="Kim K."/>
            <person name="Kruchowski S.S."/>
            <person name="Strong C.M."/>
            <person name="Grewal N."/>
            <person name="Goyea E."/>
            <person name="Hou S."/>
            <person name="Levy A."/>
            <person name="Martinka S."/>
            <person name="Mead K."/>
            <person name="McLellan M.D."/>
            <person name="Meyer R."/>
            <person name="Randall-Maher J."/>
            <person name="Tomlinson C."/>
            <person name="Dauphin-Kohlberg S."/>
            <person name="Kozlowicz-Reilly A."/>
            <person name="Shah N."/>
            <person name="Swearengen-Shahid S."/>
            <person name="Snider J."/>
            <person name="Strong J.T."/>
            <person name="Thompson J."/>
            <person name="Yoakum M."/>
            <person name="Leonard S."/>
            <person name="Pearman C."/>
            <person name="Trani L."/>
            <person name="Radionenko M."/>
            <person name="Waligorski J.E."/>
            <person name="Wang C."/>
            <person name="Rock S.M."/>
            <person name="Tin-Wollam A.-M."/>
            <person name="Maupin R."/>
            <person name="Latreille P."/>
            <person name="Wendl M.C."/>
            <person name="Yang S.-P."/>
            <person name="Pohl C."/>
            <person name="Wallis J.W."/>
            <person name="Spieth J."/>
            <person name="Bieri T.A."/>
            <person name="Berkowicz N."/>
            <person name="Nelson J.O."/>
            <person name="Osborne J."/>
            <person name="Ding L."/>
            <person name="Meyer R."/>
            <person name="Sabo A."/>
            <person name="Shotland Y."/>
            <person name="Sinha P."/>
            <person name="Wohldmann P.E."/>
            <person name="Cook L.L."/>
            <person name="Hickenbotham M.T."/>
            <person name="Eldred J."/>
            <person name="Williams D."/>
            <person name="Jones T.A."/>
            <person name="She X."/>
            <person name="Ciccarelli F.D."/>
            <person name="Izaurralde E."/>
            <person name="Taylor J."/>
            <person name="Schmutz J."/>
            <person name="Myers R.M."/>
            <person name="Cox D.R."/>
            <person name="Huang X."/>
            <person name="McPherson J.D."/>
            <person name="Mardis E.R."/>
            <person name="Clifton S.W."/>
            <person name="Warren W.C."/>
            <person name="Chinwalla A.T."/>
            <person name="Eddy S.R."/>
            <person name="Marra M.A."/>
            <person name="Ovcharenko I."/>
            <person name="Furey T.S."/>
            <person name="Miller W."/>
            <person name="Eichler E.E."/>
            <person name="Bork P."/>
            <person name="Suyama M."/>
            <person name="Torrents D."/>
            <person name="Waterston R.H."/>
            <person name="Wilson R.K."/>
        </authorList>
    </citation>
    <scope>NUCLEOTIDE SEQUENCE [LARGE SCALE GENOMIC DNA]</scope>
</reference>
<proteinExistence type="evidence at protein level"/>
<gene>
    <name evidence="2" type="primary">LIMS4</name>
    <name type="synonym">LIMS3L</name>
</gene>
<feature type="chain" id="PRO_0000409553" description="LIM and senescent cell antigen-like-containing domain protein 4">
    <location>
        <begin position="1"/>
        <end position="117"/>
    </location>
</feature>
<feature type="domain" description="LIM zinc-binding" evidence="1">
    <location>
        <begin position="70"/>
        <end position="117"/>
    </location>
</feature>
<organism>
    <name type="scientific">Homo sapiens</name>
    <name type="common">Human</name>
    <dbReference type="NCBI Taxonomy" id="9606"/>
    <lineage>
        <taxon>Eukaryota</taxon>
        <taxon>Metazoa</taxon>
        <taxon>Chordata</taxon>
        <taxon>Craniata</taxon>
        <taxon>Vertebrata</taxon>
        <taxon>Euteleostomi</taxon>
        <taxon>Mammalia</taxon>
        <taxon>Eutheria</taxon>
        <taxon>Euarchontoglires</taxon>
        <taxon>Primates</taxon>
        <taxon>Haplorrhini</taxon>
        <taxon>Catarrhini</taxon>
        <taxon>Hominidae</taxon>
        <taxon>Homo</taxon>
    </lineage>
</organism>
<name>LIMS4_HUMAN</name>
<keyword id="KW-0440">LIM domain</keyword>
<keyword id="KW-0479">Metal-binding</keyword>
<keyword id="KW-1185">Reference proteome</keyword>
<keyword id="KW-0862">Zinc</keyword>
<comment type="interaction">
    <interactant intactId="EBI-10196832">
        <id>P0CW20</id>
    </interactant>
    <interactant intactId="EBI-948603">
        <id>Q03989</id>
        <label>ARID5A</label>
    </interactant>
    <organismsDiffer>false</organismsDiffer>
    <experiments>3</experiments>
</comment>
<comment type="interaction">
    <interactant intactId="EBI-10196832">
        <id>P0CW20</id>
    </interactant>
    <interactant intactId="EBI-765407">
        <id>P41182</id>
        <label>BCL6</label>
    </interactant>
    <organismsDiffer>false</organismsDiffer>
    <experiments>6</experiments>
</comment>
<comment type="interaction">
    <interactant intactId="EBI-10196832">
        <id>P0CW20</id>
    </interactant>
    <interactant intactId="EBI-12809220">
        <id>Q5SWW7</id>
        <label>C10orf55</label>
    </interactant>
    <organismsDiffer>false</organismsDiffer>
    <experiments>3</experiments>
</comment>
<comment type="interaction">
    <interactant intactId="EBI-10196832">
        <id>P0CW20</id>
    </interactant>
    <interactant intactId="EBI-748171">
        <id>O43186</id>
        <label>CRX</label>
    </interactant>
    <organismsDiffer>false</organismsDiffer>
    <experiments>3</experiments>
</comment>
<comment type="interaction">
    <interactant intactId="EBI-10196832">
        <id>P0CW20</id>
    </interactant>
    <interactant intactId="EBI-13358054">
        <id>Q8IW50-3</id>
        <label>FAM219A</label>
    </interactant>
    <organismsDiffer>false</organismsDiffer>
    <experiments>3</experiments>
</comment>
<comment type="interaction">
    <interactant intactId="EBI-10196832">
        <id>P0CW20</id>
    </interactant>
    <interactant intactId="EBI-745707">
        <id>Q8NEA9</id>
        <label>GMCL2</label>
    </interactant>
    <organismsDiffer>false</organismsDiffer>
    <experiments>3</experiments>
</comment>
<comment type="interaction">
    <interactant intactId="EBI-10196832">
        <id>P0CW20</id>
    </interactant>
    <interactant intactId="EBI-9478422">
        <id>Q96G42</id>
        <label>KLHDC7B</label>
    </interactant>
    <organismsDiffer>false</organismsDiffer>
    <experiments>3</experiments>
</comment>
<comment type="interaction">
    <interactant intactId="EBI-10196832">
        <id>P0CW20</id>
    </interactant>
    <interactant intactId="EBI-1052037">
        <id>Q8IUC1</id>
        <label>KRTAP11-1</label>
    </interactant>
    <organismsDiffer>false</organismsDiffer>
    <experiments>3</experiments>
</comment>
<comment type="interaction">
    <interactant intactId="EBI-10196832">
        <id>P0CW20</id>
    </interactant>
    <interactant intactId="EBI-6257312">
        <id>Q9BVN2</id>
        <label>RUSC1</label>
    </interactant>
    <organismsDiffer>false</organismsDiffer>
    <experiments>3</experiments>
</comment>
<comment type="interaction">
    <interactant intactId="EBI-10196832">
        <id>P0CW20</id>
    </interactant>
    <interactant intactId="EBI-12889036">
        <id>P0CI26</id>
        <label>TRIM49C</label>
    </interactant>
    <organismsDiffer>false</organismsDiffer>
    <experiments>3</experiments>
</comment>
<dbReference type="EMBL" id="AC108938">
    <property type="protein sequence ID" value="AAY24131.1"/>
    <property type="molecule type" value="Genomic_DNA"/>
</dbReference>
<dbReference type="EMBL" id="AC112229">
    <property type="status" value="NOT_ANNOTATED_CDS"/>
    <property type="molecule type" value="Genomic_DNA"/>
</dbReference>
<dbReference type="CCDS" id="CCDS54387.1"/>
<dbReference type="RefSeq" id="NP_001192217.1">
    <property type="nucleotide sequence ID" value="NM_001205288.2"/>
</dbReference>
<dbReference type="RefSeq" id="NP_277049.1">
    <property type="nucleotide sequence ID" value="NM_033514.4"/>
</dbReference>
<dbReference type="BMRB" id="P0CW20"/>
<dbReference type="SMR" id="P0CW20"/>
<dbReference type="BioGRID" id="125178">
    <property type="interactions" value="13"/>
</dbReference>
<dbReference type="BioGRID" id="940351">
    <property type="interactions" value="11"/>
</dbReference>
<dbReference type="FunCoup" id="P0CW20">
    <property type="interactions" value="1"/>
</dbReference>
<dbReference type="IntAct" id="P0CW20">
    <property type="interactions" value="10"/>
</dbReference>
<dbReference type="iPTMnet" id="P0CW20"/>
<dbReference type="PhosphoSitePlus" id="P0CW20"/>
<dbReference type="BioMuta" id="LIMS4"/>
<dbReference type="DMDM" id="334350996"/>
<dbReference type="jPOST" id="P0CW20"/>
<dbReference type="MassIVE" id="P0CW20"/>
<dbReference type="Pumba" id="P0CW20"/>
<dbReference type="Antibodypedia" id="77119">
    <property type="antibodies" value="15 antibodies from 2 providers"/>
</dbReference>
<dbReference type="DNASU" id="96626"/>
<dbReference type="Ensembl" id="ENST00000413601.3">
    <property type="protein sequence ID" value="ENSP00000404432.2"/>
    <property type="gene ID" value="ENSG00000256671.7"/>
</dbReference>
<dbReference type="GeneID" id="100288695"/>
<dbReference type="GeneID" id="96626"/>
<dbReference type="KEGG" id="hsa:100288695"/>
<dbReference type="KEGG" id="hsa:96626"/>
<dbReference type="UCSC" id="uc002tff.4">
    <property type="organism name" value="human"/>
</dbReference>
<dbReference type="AGR" id="HGNC:30047"/>
<dbReference type="AGR" id="HGNC:39941"/>
<dbReference type="CTD" id="100288695"/>
<dbReference type="CTD" id="96626"/>
<dbReference type="DisGeNET" id="96626"/>
<dbReference type="GeneCards" id="LIMS4"/>
<dbReference type="HGNC" id="HGNC:39941">
    <property type="gene designation" value="LIMS4"/>
</dbReference>
<dbReference type="HPA" id="ENSG00000256671">
    <property type="expression patterns" value="Tissue enhanced (skeletal)"/>
</dbReference>
<dbReference type="neXtProt" id="NX_P0CW20"/>
<dbReference type="VEuPathDB" id="HostDB:ENSG00000256671"/>
<dbReference type="GeneTree" id="ENSGT00940000153518"/>
<dbReference type="HOGENOM" id="CLU_2084116_0_0_1"/>
<dbReference type="InParanoid" id="P0CW20"/>
<dbReference type="OrthoDB" id="20689at2759"/>
<dbReference type="PAN-GO" id="P0CW20">
    <property type="GO annotations" value="0 GO annotations based on evolutionary models"/>
</dbReference>
<dbReference type="PathwayCommons" id="P0CW20"/>
<dbReference type="SignaLink" id="P0CW20"/>
<dbReference type="SIGNOR" id="P0CW20"/>
<dbReference type="BioGRID-ORCS" id="100288695">
    <property type="hits" value="117 hits in 658 CRISPR screens"/>
</dbReference>
<dbReference type="BioGRID-ORCS" id="96626">
    <property type="hits" value="215 hits in 958 CRISPR screens"/>
</dbReference>
<dbReference type="ChiTaRS" id="LIMS4">
    <property type="organism name" value="human"/>
</dbReference>
<dbReference type="Pharos" id="P0CW20">
    <property type="development level" value="Tdark"/>
</dbReference>
<dbReference type="PRO" id="PR:P0CW20"/>
<dbReference type="Proteomes" id="UP000005640">
    <property type="component" value="Chromosome 2"/>
</dbReference>
<dbReference type="RNAct" id="P0CW20">
    <property type="molecule type" value="protein"/>
</dbReference>
<dbReference type="Bgee" id="ENSG00000256671">
    <property type="expression patterns" value="Expressed in descending thoracic aorta and 94 other cell types or tissues"/>
</dbReference>
<dbReference type="GO" id="GO:0046872">
    <property type="term" value="F:metal ion binding"/>
    <property type="evidence" value="ECO:0007669"/>
    <property type="project" value="UniProtKB-KW"/>
</dbReference>
<dbReference type="Gene3D" id="2.10.110.10">
    <property type="entry name" value="Cysteine Rich Protein"/>
    <property type="match status" value="1"/>
</dbReference>
<dbReference type="InterPro" id="IPR017351">
    <property type="entry name" value="PINCH-1-4-like"/>
</dbReference>
<dbReference type="InterPro" id="IPR001781">
    <property type="entry name" value="Znf_LIM"/>
</dbReference>
<dbReference type="PANTHER" id="PTHR24210:SF12">
    <property type="entry name" value="LIM AND SENESCENT CELL ANTIGEN-LIKE-CONTAINING DOMAIN PROTEIN"/>
    <property type="match status" value="1"/>
</dbReference>
<dbReference type="PANTHER" id="PTHR24210">
    <property type="entry name" value="LIM DOMAIN-CONTAINING PROTEIN"/>
    <property type="match status" value="1"/>
</dbReference>
<dbReference type="Pfam" id="PF00412">
    <property type="entry name" value="LIM"/>
    <property type="match status" value="1"/>
</dbReference>
<dbReference type="SMART" id="SM00132">
    <property type="entry name" value="LIM"/>
    <property type="match status" value="1"/>
</dbReference>
<dbReference type="SUPFAM" id="SSF57716">
    <property type="entry name" value="Glucocorticoid receptor-like (DNA-binding domain)"/>
    <property type="match status" value="1"/>
</dbReference>
<dbReference type="PROSITE" id="PS00478">
    <property type="entry name" value="LIM_DOMAIN_1"/>
    <property type="match status" value="1"/>
</dbReference>
<dbReference type="PROSITE" id="PS50023">
    <property type="entry name" value="LIM_DOMAIN_2"/>
    <property type="match status" value="1"/>
</dbReference>
<accession>P0CW20</accession>
<accession>C9K0W2</accession>
<evidence type="ECO:0000255" key="1">
    <source>
        <dbReference type="PROSITE-ProRule" id="PRU00125"/>
    </source>
</evidence>
<evidence type="ECO:0000312" key="2">
    <source>
        <dbReference type="HGNC" id="HGNC:39941"/>
    </source>
</evidence>
<protein>
    <recommendedName>
        <fullName>LIM and senescent cell antigen-like-containing domain protein 4</fullName>
    </recommendedName>
    <alternativeName>
        <fullName>LIM and senescent cell antigen-like-containing domain protein 3-like</fullName>
    </alternativeName>
</protein>
<sequence>MAFSGRARPCIIPENEEIPRAALNTVHEANGTEDERAVSKLQRRHSDVKVYKEFCDFYAKFNMANALASATCERCKGGFAPAETIVNSNGELYHEQCFVCAQCFQQFPEGLFYEERT</sequence>